<evidence type="ECO:0000255" key="1">
    <source>
        <dbReference type="HAMAP-Rule" id="MF_00471"/>
    </source>
</evidence>
<keyword id="KW-0963">Cytoplasm</keyword>
<gene>
    <name evidence="1" type="primary">rraA</name>
    <name type="ordered locus">YPK_4106</name>
</gene>
<comment type="function">
    <text evidence="1">Globally modulates RNA abundance by binding to RNase E (Rne) and regulating its endonucleolytic activity. Can modulate Rne action in a substrate-dependent manner by altering the composition of the degradosome. Modulates RNA-binding and helicase activities of the degradosome.</text>
</comment>
<comment type="subunit">
    <text evidence="1">Homotrimer. Binds to both RNA-binding sites in the C-terminal region of Rne and to RhlB.</text>
</comment>
<comment type="subcellular location">
    <subcellularLocation>
        <location evidence="1">Cytoplasm</location>
    </subcellularLocation>
</comment>
<comment type="similarity">
    <text evidence="1">Belongs to the RraA family.</text>
</comment>
<feature type="chain" id="PRO_1000194884" description="Regulator of ribonuclease activity A">
    <location>
        <begin position="1"/>
        <end position="161"/>
    </location>
</feature>
<proteinExistence type="inferred from homology"/>
<reference key="1">
    <citation type="submission" date="2008-02" db="EMBL/GenBank/DDBJ databases">
        <title>Complete sequence of Yersinia pseudotuberculosis YPIII.</title>
        <authorList>
            <consortium name="US DOE Joint Genome Institute"/>
            <person name="Copeland A."/>
            <person name="Lucas S."/>
            <person name="Lapidus A."/>
            <person name="Glavina del Rio T."/>
            <person name="Dalin E."/>
            <person name="Tice H."/>
            <person name="Bruce D."/>
            <person name="Goodwin L."/>
            <person name="Pitluck S."/>
            <person name="Munk A.C."/>
            <person name="Brettin T."/>
            <person name="Detter J.C."/>
            <person name="Han C."/>
            <person name="Tapia R."/>
            <person name="Schmutz J."/>
            <person name="Larimer F."/>
            <person name="Land M."/>
            <person name="Hauser L."/>
            <person name="Challacombe J.F."/>
            <person name="Green L."/>
            <person name="Lindler L.E."/>
            <person name="Nikolich M.P."/>
            <person name="Richardson P."/>
        </authorList>
    </citation>
    <scope>NUCLEOTIDE SEQUENCE [LARGE SCALE GENOMIC DNA]</scope>
    <source>
        <strain>YPIII</strain>
    </source>
</reference>
<protein>
    <recommendedName>
        <fullName evidence="1">Regulator of ribonuclease activity A</fullName>
    </recommendedName>
</protein>
<organism>
    <name type="scientific">Yersinia pseudotuberculosis serotype O:3 (strain YPIII)</name>
    <dbReference type="NCBI Taxonomy" id="502800"/>
    <lineage>
        <taxon>Bacteria</taxon>
        <taxon>Pseudomonadati</taxon>
        <taxon>Pseudomonadota</taxon>
        <taxon>Gammaproteobacteria</taxon>
        <taxon>Enterobacterales</taxon>
        <taxon>Yersiniaceae</taxon>
        <taxon>Yersinia</taxon>
    </lineage>
</organism>
<name>RRAA_YERPY</name>
<accession>B1JQ78</accession>
<sequence>MKYDTSDLCDIYHEEVNVVEPLFSNFGGRTSFGGKITTVKCFEDNGLLFDLLEENGLGRVLVVDGGGSVRRALINAELAELALKNEWEGIVVYGAVRQVDDLAELDIGIQAMAAIPVGAADEGVGESDIRVNFGGVTFFSGDHLYADNTGIILSEDPLDIE</sequence>
<dbReference type="EMBL" id="CP000950">
    <property type="protein sequence ID" value="ACA70365.1"/>
    <property type="molecule type" value="Genomic_DNA"/>
</dbReference>
<dbReference type="RefSeq" id="WP_002208945.1">
    <property type="nucleotide sequence ID" value="NZ_CP009792.1"/>
</dbReference>
<dbReference type="SMR" id="B1JQ78"/>
<dbReference type="GeneID" id="57974491"/>
<dbReference type="KEGG" id="ypy:YPK_4106"/>
<dbReference type="PATRIC" id="fig|502800.11.peg.454"/>
<dbReference type="GO" id="GO:0005829">
    <property type="term" value="C:cytosol"/>
    <property type="evidence" value="ECO:0007669"/>
    <property type="project" value="TreeGrafter"/>
</dbReference>
<dbReference type="GO" id="GO:0060698">
    <property type="term" value="F:endoribonuclease inhibitor activity"/>
    <property type="evidence" value="ECO:0007669"/>
    <property type="project" value="UniProtKB-UniRule"/>
</dbReference>
<dbReference type="GO" id="GO:0019899">
    <property type="term" value="F:enzyme binding"/>
    <property type="evidence" value="ECO:0007669"/>
    <property type="project" value="UniProtKB-UniRule"/>
</dbReference>
<dbReference type="GO" id="GO:1902369">
    <property type="term" value="P:negative regulation of RNA catabolic process"/>
    <property type="evidence" value="ECO:0007669"/>
    <property type="project" value="TreeGrafter"/>
</dbReference>
<dbReference type="CDD" id="cd16841">
    <property type="entry name" value="RraA_family"/>
    <property type="match status" value="1"/>
</dbReference>
<dbReference type="Gene3D" id="3.50.30.40">
    <property type="entry name" value="Ribonuclease E inhibitor RraA/RraA-like"/>
    <property type="match status" value="1"/>
</dbReference>
<dbReference type="HAMAP" id="MF_00471">
    <property type="entry name" value="RraA"/>
    <property type="match status" value="1"/>
</dbReference>
<dbReference type="InterPro" id="IPR010203">
    <property type="entry name" value="RraA"/>
</dbReference>
<dbReference type="InterPro" id="IPR005493">
    <property type="entry name" value="RraA/RraA-like"/>
</dbReference>
<dbReference type="InterPro" id="IPR036704">
    <property type="entry name" value="RraA/RraA-like_sf"/>
</dbReference>
<dbReference type="InterPro" id="IPR014339">
    <property type="entry name" value="RraA_gpbac"/>
</dbReference>
<dbReference type="NCBIfam" id="TIGR01935">
    <property type="entry name" value="NOT-MenG"/>
    <property type="match status" value="1"/>
</dbReference>
<dbReference type="NCBIfam" id="NF006875">
    <property type="entry name" value="PRK09372.1"/>
    <property type="match status" value="1"/>
</dbReference>
<dbReference type="NCBIfam" id="TIGR02998">
    <property type="entry name" value="RraA_entero"/>
    <property type="match status" value="1"/>
</dbReference>
<dbReference type="PANTHER" id="PTHR33254">
    <property type="entry name" value="4-HYDROXY-4-METHYL-2-OXOGLUTARATE ALDOLASE 3-RELATED"/>
    <property type="match status" value="1"/>
</dbReference>
<dbReference type="PANTHER" id="PTHR33254:SF29">
    <property type="entry name" value="REGULATOR OF RIBONUCLEASE ACTIVITY A"/>
    <property type="match status" value="1"/>
</dbReference>
<dbReference type="Pfam" id="PF03737">
    <property type="entry name" value="RraA-like"/>
    <property type="match status" value="1"/>
</dbReference>
<dbReference type="SUPFAM" id="SSF89562">
    <property type="entry name" value="RraA-like"/>
    <property type="match status" value="1"/>
</dbReference>